<protein>
    <recommendedName>
        <fullName evidence="1">Lysine--tRNA ligase</fullName>
        <ecNumber evidence="1">6.1.1.6</ecNumber>
    </recommendedName>
    <alternativeName>
        <fullName evidence="1">Lysyl-tRNA synthetase</fullName>
        <shortName evidence="1">LysRS</shortName>
    </alternativeName>
</protein>
<keyword id="KW-0030">Aminoacyl-tRNA synthetase</keyword>
<keyword id="KW-0067">ATP-binding</keyword>
<keyword id="KW-0963">Cytoplasm</keyword>
<keyword id="KW-0436">Ligase</keyword>
<keyword id="KW-0460">Magnesium</keyword>
<keyword id="KW-0479">Metal-binding</keyword>
<keyword id="KW-0547">Nucleotide-binding</keyword>
<keyword id="KW-0648">Protein biosynthesis</keyword>
<sequence length="500" mass="57061">MTEQVQDENKLIAERRAKLDSIRPNCSANAHPNTFRRTHKAAELQEKYGQNTKEELEALGFRTSIAGRIMAKRGPFLVIQDVSGRIQAYAEKGVQADLKDRYQGLDIGDIIGVTGQLHLSGKGDLYVNMEEYQLLTKALRPLPEKFHGLTDQETRYRQRYVDLIVNEESRQAFVMRSKVVAAIRNFMIKKEFMEVETPMMHVIPGGASARPFITHHNALDMPMYLRIAPELYLKRLVVGGFERVFEINRNFRNEGLSPRHNPEFTMMEFYMAYADYKDLMDLTEELLSSIAIELLGSAQMPYGEHTVDFGGPYARLSMLEAIQKYNPDNATIQAMTYEQVKDLEFMRELAISLGIKIEKFWTCGQLLEEIFGETAEWQLMQPTFITGYPADISPLARRNDDNHFITDRFEFFIGGREVANGFSELNDAEDQDSRFKAQVDAKDAGDDEAMFYDADYITALEHGLPPTAGQGIGIDRLVMLFTNTHTIRDVILFPAMRPQA</sequence>
<evidence type="ECO:0000255" key="1">
    <source>
        <dbReference type="HAMAP-Rule" id="MF_00252"/>
    </source>
</evidence>
<name>SYK_SHEPC</name>
<organism>
    <name type="scientific">Shewanella putrefaciens (strain CN-32 / ATCC BAA-453)</name>
    <dbReference type="NCBI Taxonomy" id="319224"/>
    <lineage>
        <taxon>Bacteria</taxon>
        <taxon>Pseudomonadati</taxon>
        <taxon>Pseudomonadota</taxon>
        <taxon>Gammaproteobacteria</taxon>
        <taxon>Alteromonadales</taxon>
        <taxon>Shewanellaceae</taxon>
        <taxon>Shewanella</taxon>
    </lineage>
</organism>
<gene>
    <name evidence="1" type="primary">lysS</name>
    <name type="ordered locus">Sputcn32_3049</name>
</gene>
<proteinExistence type="inferred from homology"/>
<feature type="chain" id="PRO_1000012930" description="Lysine--tRNA ligase">
    <location>
        <begin position="1"/>
        <end position="500"/>
    </location>
</feature>
<feature type="binding site" evidence="1">
    <location>
        <position position="410"/>
    </location>
    <ligand>
        <name>Mg(2+)</name>
        <dbReference type="ChEBI" id="CHEBI:18420"/>
        <label>1</label>
    </ligand>
</feature>
<feature type="binding site" evidence="1">
    <location>
        <position position="417"/>
    </location>
    <ligand>
        <name>Mg(2+)</name>
        <dbReference type="ChEBI" id="CHEBI:18420"/>
        <label>1</label>
    </ligand>
</feature>
<feature type="binding site" evidence="1">
    <location>
        <position position="417"/>
    </location>
    <ligand>
        <name>Mg(2+)</name>
        <dbReference type="ChEBI" id="CHEBI:18420"/>
        <label>2</label>
    </ligand>
</feature>
<accession>A4Y9X9</accession>
<comment type="catalytic activity">
    <reaction evidence="1">
        <text>tRNA(Lys) + L-lysine + ATP = L-lysyl-tRNA(Lys) + AMP + diphosphate</text>
        <dbReference type="Rhea" id="RHEA:20792"/>
        <dbReference type="Rhea" id="RHEA-COMP:9696"/>
        <dbReference type="Rhea" id="RHEA-COMP:9697"/>
        <dbReference type="ChEBI" id="CHEBI:30616"/>
        <dbReference type="ChEBI" id="CHEBI:32551"/>
        <dbReference type="ChEBI" id="CHEBI:33019"/>
        <dbReference type="ChEBI" id="CHEBI:78442"/>
        <dbReference type="ChEBI" id="CHEBI:78529"/>
        <dbReference type="ChEBI" id="CHEBI:456215"/>
        <dbReference type="EC" id="6.1.1.6"/>
    </reaction>
</comment>
<comment type="cofactor">
    <cofactor evidence="1">
        <name>Mg(2+)</name>
        <dbReference type="ChEBI" id="CHEBI:18420"/>
    </cofactor>
    <text evidence="1">Binds 3 Mg(2+) ions per subunit.</text>
</comment>
<comment type="subunit">
    <text evidence="1">Homodimer.</text>
</comment>
<comment type="subcellular location">
    <subcellularLocation>
        <location evidence="1">Cytoplasm</location>
    </subcellularLocation>
</comment>
<comment type="similarity">
    <text evidence="1">Belongs to the class-II aminoacyl-tRNA synthetase family.</text>
</comment>
<reference key="1">
    <citation type="submission" date="2007-04" db="EMBL/GenBank/DDBJ databases">
        <title>Complete sequence of Shewanella putrefaciens CN-32.</title>
        <authorList>
            <consortium name="US DOE Joint Genome Institute"/>
            <person name="Copeland A."/>
            <person name="Lucas S."/>
            <person name="Lapidus A."/>
            <person name="Barry K."/>
            <person name="Detter J.C."/>
            <person name="Glavina del Rio T."/>
            <person name="Hammon N."/>
            <person name="Israni S."/>
            <person name="Dalin E."/>
            <person name="Tice H."/>
            <person name="Pitluck S."/>
            <person name="Chain P."/>
            <person name="Malfatti S."/>
            <person name="Shin M."/>
            <person name="Vergez L."/>
            <person name="Schmutz J."/>
            <person name="Larimer F."/>
            <person name="Land M."/>
            <person name="Hauser L."/>
            <person name="Kyrpides N."/>
            <person name="Mikhailova N."/>
            <person name="Romine M.F."/>
            <person name="Fredrickson J."/>
            <person name="Tiedje J."/>
            <person name="Richardson P."/>
        </authorList>
    </citation>
    <scope>NUCLEOTIDE SEQUENCE [LARGE SCALE GENOMIC DNA]</scope>
    <source>
        <strain>CN-32 / ATCC BAA-453</strain>
    </source>
</reference>
<dbReference type="EC" id="6.1.1.6" evidence="1"/>
<dbReference type="EMBL" id="CP000681">
    <property type="protein sequence ID" value="ABP76762.1"/>
    <property type="molecule type" value="Genomic_DNA"/>
</dbReference>
<dbReference type="SMR" id="A4Y9X9"/>
<dbReference type="STRING" id="319224.Sputcn32_3049"/>
<dbReference type="KEGG" id="spc:Sputcn32_3049"/>
<dbReference type="eggNOG" id="COG1190">
    <property type="taxonomic scope" value="Bacteria"/>
</dbReference>
<dbReference type="HOGENOM" id="CLU_008255_6_0_6"/>
<dbReference type="GO" id="GO:0005829">
    <property type="term" value="C:cytosol"/>
    <property type="evidence" value="ECO:0007669"/>
    <property type="project" value="TreeGrafter"/>
</dbReference>
<dbReference type="GO" id="GO:0005524">
    <property type="term" value="F:ATP binding"/>
    <property type="evidence" value="ECO:0007669"/>
    <property type="project" value="UniProtKB-UniRule"/>
</dbReference>
<dbReference type="GO" id="GO:0004824">
    <property type="term" value="F:lysine-tRNA ligase activity"/>
    <property type="evidence" value="ECO:0007669"/>
    <property type="project" value="UniProtKB-UniRule"/>
</dbReference>
<dbReference type="GO" id="GO:0000287">
    <property type="term" value="F:magnesium ion binding"/>
    <property type="evidence" value="ECO:0007669"/>
    <property type="project" value="UniProtKB-UniRule"/>
</dbReference>
<dbReference type="GO" id="GO:0000049">
    <property type="term" value="F:tRNA binding"/>
    <property type="evidence" value="ECO:0007669"/>
    <property type="project" value="TreeGrafter"/>
</dbReference>
<dbReference type="GO" id="GO:0006430">
    <property type="term" value="P:lysyl-tRNA aminoacylation"/>
    <property type="evidence" value="ECO:0007669"/>
    <property type="project" value="UniProtKB-UniRule"/>
</dbReference>
<dbReference type="CDD" id="cd00775">
    <property type="entry name" value="LysRS_core"/>
    <property type="match status" value="1"/>
</dbReference>
<dbReference type="CDD" id="cd04322">
    <property type="entry name" value="LysRS_N"/>
    <property type="match status" value="1"/>
</dbReference>
<dbReference type="FunFam" id="2.40.50.140:FF:000024">
    <property type="entry name" value="Lysine--tRNA ligase"/>
    <property type="match status" value="1"/>
</dbReference>
<dbReference type="FunFam" id="3.30.930.10:FF:000001">
    <property type="entry name" value="Lysine--tRNA ligase"/>
    <property type="match status" value="1"/>
</dbReference>
<dbReference type="Gene3D" id="3.30.930.10">
    <property type="entry name" value="Bira Bifunctional Protein, Domain 2"/>
    <property type="match status" value="1"/>
</dbReference>
<dbReference type="Gene3D" id="2.40.50.140">
    <property type="entry name" value="Nucleic acid-binding proteins"/>
    <property type="match status" value="1"/>
</dbReference>
<dbReference type="HAMAP" id="MF_00252">
    <property type="entry name" value="Lys_tRNA_synth_class2"/>
    <property type="match status" value="1"/>
</dbReference>
<dbReference type="InterPro" id="IPR004364">
    <property type="entry name" value="Aa-tRNA-synt_II"/>
</dbReference>
<dbReference type="InterPro" id="IPR006195">
    <property type="entry name" value="aa-tRNA-synth_II"/>
</dbReference>
<dbReference type="InterPro" id="IPR045864">
    <property type="entry name" value="aa-tRNA-synth_II/BPL/LPL"/>
</dbReference>
<dbReference type="InterPro" id="IPR002313">
    <property type="entry name" value="Lys-tRNA-ligase_II"/>
</dbReference>
<dbReference type="InterPro" id="IPR044136">
    <property type="entry name" value="Lys-tRNA-ligase_II_N"/>
</dbReference>
<dbReference type="InterPro" id="IPR018149">
    <property type="entry name" value="Lys-tRNA-synth_II_C"/>
</dbReference>
<dbReference type="InterPro" id="IPR012340">
    <property type="entry name" value="NA-bd_OB-fold"/>
</dbReference>
<dbReference type="InterPro" id="IPR004365">
    <property type="entry name" value="NA-bd_OB_tRNA"/>
</dbReference>
<dbReference type="NCBIfam" id="TIGR00499">
    <property type="entry name" value="lysS_bact"/>
    <property type="match status" value="1"/>
</dbReference>
<dbReference type="NCBIfam" id="NF001756">
    <property type="entry name" value="PRK00484.1"/>
    <property type="match status" value="1"/>
</dbReference>
<dbReference type="PANTHER" id="PTHR42918:SF15">
    <property type="entry name" value="LYSINE--TRNA LIGASE, CHLOROPLASTIC_MITOCHONDRIAL"/>
    <property type="match status" value="1"/>
</dbReference>
<dbReference type="PANTHER" id="PTHR42918">
    <property type="entry name" value="LYSYL-TRNA SYNTHETASE"/>
    <property type="match status" value="1"/>
</dbReference>
<dbReference type="Pfam" id="PF00152">
    <property type="entry name" value="tRNA-synt_2"/>
    <property type="match status" value="1"/>
</dbReference>
<dbReference type="Pfam" id="PF01336">
    <property type="entry name" value="tRNA_anti-codon"/>
    <property type="match status" value="1"/>
</dbReference>
<dbReference type="PRINTS" id="PR00982">
    <property type="entry name" value="TRNASYNTHLYS"/>
</dbReference>
<dbReference type="SUPFAM" id="SSF55681">
    <property type="entry name" value="Class II aaRS and biotin synthetases"/>
    <property type="match status" value="1"/>
</dbReference>
<dbReference type="SUPFAM" id="SSF50249">
    <property type="entry name" value="Nucleic acid-binding proteins"/>
    <property type="match status" value="1"/>
</dbReference>
<dbReference type="PROSITE" id="PS50862">
    <property type="entry name" value="AA_TRNA_LIGASE_II"/>
    <property type="match status" value="1"/>
</dbReference>